<protein>
    <recommendedName>
        <fullName evidence="1">Proline--tRNA ligase</fullName>
        <ecNumber evidence="1">6.1.1.15</ecNumber>
    </recommendedName>
    <alternativeName>
        <fullName evidence="1">Prolyl-tRNA synthetase</fullName>
        <shortName evidence="1">ProRS</shortName>
    </alternativeName>
</protein>
<dbReference type="EC" id="6.1.1.15" evidence="1"/>
<dbReference type="EMBL" id="CP000259">
    <property type="protein sequence ID" value="ABF32861.1"/>
    <property type="molecule type" value="Genomic_DNA"/>
</dbReference>
<dbReference type="RefSeq" id="WP_002988037.1">
    <property type="nucleotide sequence ID" value="NC_008021.1"/>
</dbReference>
<dbReference type="SMR" id="Q1JJW2"/>
<dbReference type="KEGG" id="spk:MGAS9429_Spy1674"/>
<dbReference type="HOGENOM" id="CLU_016739_0_0_9"/>
<dbReference type="Proteomes" id="UP000002433">
    <property type="component" value="Chromosome"/>
</dbReference>
<dbReference type="GO" id="GO:0005829">
    <property type="term" value="C:cytosol"/>
    <property type="evidence" value="ECO:0007669"/>
    <property type="project" value="TreeGrafter"/>
</dbReference>
<dbReference type="GO" id="GO:0002161">
    <property type="term" value="F:aminoacyl-tRNA deacylase activity"/>
    <property type="evidence" value="ECO:0007669"/>
    <property type="project" value="InterPro"/>
</dbReference>
<dbReference type="GO" id="GO:0005524">
    <property type="term" value="F:ATP binding"/>
    <property type="evidence" value="ECO:0007669"/>
    <property type="project" value="UniProtKB-UniRule"/>
</dbReference>
<dbReference type="GO" id="GO:0140096">
    <property type="term" value="F:catalytic activity, acting on a protein"/>
    <property type="evidence" value="ECO:0007669"/>
    <property type="project" value="UniProtKB-ARBA"/>
</dbReference>
<dbReference type="GO" id="GO:0004827">
    <property type="term" value="F:proline-tRNA ligase activity"/>
    <property type="evidence" value="ECO:0007669"/>
    <property type="project" value="UniProtKB-UniRule"/>
</dbReference>
<dbReference type="GO" id="GO:0016740">
    <property type="term" value="F:transferase activity"/>
    <property type="evidence" value="ECO:0007669"/>
    <property type="project" value="UniProtKB-ARBA"/>
</dbReference>
<dbReference type="GO" id="GO:0006433">
    <property type="term" value="P:prolyl-tRNA aminoacylation"/>
    <property type="evidence" value="ECO:0007669"/>
    <property type="project" value="UniProtKB-UniRule"/>
</dbReference>
<dbReference type="CDD" id="cd04334">
    <property type="entry name" value="ProRS-INS"/>
    <property type="match status" value="1"/>
</dbReference>
<dbReference type="CDD" id="cd00861">
    <property type="entry name" value="ProRS_anticodon_short"/>
    <property type="match status" value="1"/>
</dbReference>
<dbReference type="FunFam" id="3.40.50.800:FF:000011">
    <property type="entry name" value="Proline--tRNA ligase"/>
    <property type="match status" value="1"/>
</dbReference>
<dbReference type="Gene3D" id="3.40.50.800">
    <property type="entry name" value="Anticodon-binding domain"/>
    <property type="match status" value="1"/>
</dbReference>
<dbReference type="Gene3D" id="3.30.930.10">
    <property type="entry name" value="Bira Bifunctional Protein, Domain 2"/>
    <property type="match status" value="2"/>
</dbReference>
<dbReference type="Gene3D" id="3.90.960.10">
    <property type="entry name" value="YbaK/aminoacyl-tRNA synthetase-associated domain"/>
    <property type="match status" value="1"/>
</dbReference>
<dbReference type="HAMAP" id="MF_01569">
    <property type="entry name" value="Pro_tRNA_synth_type1"/>
    <property type="match status" value="1"/>
</dbReference>
<dbReference type="InterPro" id="IPR002314">
    <property type="entry name" value="aa-tRNA-synt_IIb"/>
</dbReference>
<dbReference type="InterPro" id="IPR006195">
    <property type="entry name" value="aa-tRNA-synth_II"/>
</dbReference>
<dbReference type="InterPro" id="IPR045864">
    <property type="entry name" value="aa-tRNA-synth_II/BPL/LPL"/>
</dbReference>
<dbReference type="InterPro" id="IPR004154">
    <property type="entry name" value="Anticodon-bd"/>
</dbReference>
<dbReference type="InterPro" id="IPR036621">
    <property type="entry name" value="Anticodon-bd_dom_sf"/>
</dbReference>
<dbReference type="InterPro" id="IPR002316">
    <property type="entry name" value="Pro-tRNA-ligase_IIa"/>
</dbReference>
<dbReference type="InterPro" id="IPR004500">
    <property type="entry name" value="Pro-tRNA-synth_IIa_bac-type"/>
</dbReference>
<dbReference type="InterPro" id="IPR023717">
    <property type="entry name" value="Pro-tRNA-Synthase_IIa_type1"/>
</dbReference>
<dbReference type="InterPro" id="IPR050062">
    <property type="entry name" value="Pro-tRNA_synthetase"/>
</dbReference>
<dbReference type="InterPro" id="IPR044140">
    <property type="entry name" value="ProRS_anticodon_short"/>
</dbReference>
<dbReference type="InterPro" id="IPR036754">
    <property type="entry name" value="YbaK/aa-tRNA-synt-asso_dom_sf"/>
</dbReference>
<dbReference type="InterPro" id="IPR007214">
    <property type="entry name" value="YbaK/aa-tRNA-synth-assoc-dom"/>
</dbReference>
<dbReference type="NCBIfam" id="NF006625">
    <property type="entry name" value="PRK09194.1"/>
    <property type="match status" value="1"/>
</dbReference>
<dbReference type="NCBIfam" id="TIGR00409">
    <property type="entry name" value="proS_fam_II"/>
    <property type="match status" value="2"/>
</dbReference>
<dbReference type="PANTHER" id="PTHR42753">
    <property type="entry name" value="MITOCHONDRIAL RIBOSOME PROTEIN L39/PROLYL-TRNA LIGASE FAMILY MEMBER"/>
    <property type="match status" value="1"/>
</dbReference>
<dbReference type="PANTHER" id="PTHR42753:SF2">
    <property type="entry name" value="PROLINE--TRNA LIGASE"/>
    <property type="match status" value="1"/>
</dbReference>
<dbReference type="Pfam" id="PF03129">
    <property type="entry name" value="HGTP_anticodon"/>
    <property type="match status" value="1"/>
</dbReference>
<dbReference type="Pfam" id="PF00587">
    <property type="entry name" value="tRNA-synt_2b"/>
    <property type="match status" value="1"/>
</dbReference>
<dbReference type="Pfam" id="PF04073">
    <property type="entry name" value="tRNA_edit"/>
    <property type="match status" value="1"/>
</dbReference>
<dbReference type="PRINTS" id="PR01046">
    <property type="entry name" value="TRNASYNTHPRO"/>
</dbReference>
<dbReference type="SUPFAM" id="SSF52954">
    <property type="entry name" value="Class II aaRS ABD-related"/>
    <property type="match status" value="1"/>
</dbReference>
<dbReference type="SUPFAM" id="SSF55681">
    <property type="entry name" value="Class II aaRS and biotin synthetases"/>
    <property type="match status" value="1"/>
</dbReference>
<dbReference type="SUPFAM" id="SSF55826">
    <property type="entry name" value="YbaK/ProRS associated domain"/>
    <property type="match status" value="1"/>
</dbReference>
<dbReference type="PROSITE" id="PS50862">
    <property type="entry name" value="AA_TRNA_LIGASE_II"/>
    <property type="match status" value="1"/>
</dbReference>
<reference key="1">
    <citation type="journal article" date="2006" name="Proc. Natl. Acad. Sci. U.S.A.">
        <title>Molecular genetic anatomy of inter- and intraserotype variation in the human bacterial pathogen group A Streptococcus.</title>
        <authorList>
            <person name="Beres S.B."/>
            <person name="Richter E.W."/>
            <person name="Nagiec M.J."/>
            <person name="Sumby P."/>
            <person name="Porcella S.F."/>
            <person name="DeLeo F.R."/>
            <person name="Musser J.M."/>
        </authorList>
    </citation>
    <scope>NUCLEOTIDE SEQUENCE [LARGE SCALE GENOMIC DNA]</scope>
    <source>
        <strain>MGAS9429</strain>
    </source>
</reference>
<evidence type="ECO:0000255" key="1">
    <source>
        <dbReference type="HAMAP-Rule" id="MF_01569"/>
    </source>
</evidence>
<organism>
    <name type="scientific">Streptococcus pyogenes serotype M12 (strain MGAS9429)</name>
    <dbReference type="NCBI Taxonomy" id="370551"/>
    <lineage>
        <taxon>Bacteria</taxon>
        <taxon>Bacillati</taxon>
        <taxon>Bacillota</taxon>
        <taxon>Bacilli</taxon>
        <taxon>Lactobacillales</taxon>
        <taxon>Streptococcaceae</taxon>
        <taxon>Streptococcus</taxon>
    </lineage>
</organism>
<comment type="function">
    <text evidence="1">Catalyzes the attachment of proline to tRNA(Pro) in a two-step reaction: proline is first activated by ATP to form Pro-AMP and then transferred to the acceptor end of tRNA(Pro). As ProRS can inadvertently accommodate and process non-cognate amino acids such as alanine and cysteine, to avoid such errors it has two additional distinct editing activities against alanine. One activity is designated as 'pretransfer' editing and involves the tRNA(Pro)-independent hydrolysis of activated Ala-AMP. The other activity is designated 'posttransfer' editing and involves deacylation of mischarged Ala-tRNA(Pro). The misacylated Cys-tRNA(Pro) is not edited by ProRS.</text>
</comment>
<comment type="catalytic activity">
    <reaction evidence="1">
        <text>tRNA(Pro) + L-proline + ATP = L-prolyl-tRNA(Pro) + AMP + diphosphate</text>
        <dbReference type="Rhea" id="RHEA:14305"/>
        <dbReference type="Rhea" id="RHEA-COMP:9700"/>
        <dbReference type="Rhea" id="RHEA-COMP:9702"/>
        <dbReference type="ChEBI" id="CHEBI:30616"/>
        <dbReference type="ChEBI" id="CHEBI:33019"/>
        <dbReference type="ChEBI" id="CHEBI:60039"/>
        <dbReference type="ChEBI" id="CHEBI:78442"/>
        <dbReference type="ChEBI" id="CHEBI:78532"/>
        <dbReference type="ChEBI" id="CHEBI:456215"/>
        <dbReference type="EC" id="6.1.1.15"/>
    </reaction>
</comment>
<comment type="subunit">
    <text evidence="1">Homodimer.</text>
</comment>
<comment type="subcellular location">
    <subcellularLocation>
        <location evidence="1">Cytoplasm</location>
    </subcellularLocation>
</comment>
<comment type="domain">
    <text evidence="1">Consists of three domains: the N-terminal catalytic domain, the editing domain and the C-terminal anticodon-binding domain.</text>
</comment>
<comment type="similarity">
    <text evidence="1">Belongs to the class-II aminoacyl-tRNA synthetase family. ProS type 1 subfamily.</text>
</comment>
<sequence>MKQSKLLIPTLREMPSDAQVISHALMVRAGYVRQVSAGIYAYLPLANRTIEKFKTIMREEFEKIGAVEMLAPALLTADLWRESGRYETYGEDLYKLKNRDNSDFILGPTHEETFTTLVRDAVKSYKQLPLNLYQIQSKYRDEKRPRNGLLRTREFIMKDGYSFHHNYEDLDVTYEDYRQAYEAIFTRAGLDFKGIIGDGGAMGGKDSQEFMAITPARTDLDRWVVLDKSIASMDDIPKEVLEEIKAELAAWMISGEDTIAYSTESSYAANLEMATNEYKPSSKVAAEDALAEVETPHCKTIDEVAAFLSVDETQTIKTLLFVADNEPVVALLVGNDHINTVKLKNYLAADFLEPASEEEARAFFGAGFGSLGPVNLAQGSRIVADRKVQNLTNAVAGANKDGFHVTGVNPGRDFQAEYVDIREVKEGEMSPDGHGVLQFARGIEVGHIFKLGTRYSDSMGATILDENGRAVPIVMGCYGIGVSRILSAVIEQHARLFVNKTPKGDYRYAWGVNFPKELAPFDVHLITVNVKDQVAQDLTAKLEADLTAKGYDVLTDDRNERVGSKFSDSDLIGLPIRVTVGKKAAEGIVEIKIKATGASIEVNAENLIETLEILTKEH</sequence>
<proteinExistence type="inferred from homology"/>
<gene>
    <name evidence="1" type="primary">proS</name>
    <name type="ordered locus">MGAS9429_Spy1674</name>
</gene>
<feature type="chain" id="PRO_0000248781" description="Proline--tRNA ligase">
    <location>
        <begin position="1"/>
        <end position="618"/>
    </location>
</feature>
<accession>Q1JJW2</accession>
<name>SYP_STRPC</name>
<keyword id="KW-0030">Aminoacyl-tRNA synthetase</keyword>
<keyword id="KW-0067">ATP-binding</keyword>
<keyword id="KW-0963">Cytoplasm</keyword>
<keyword id="KW-0436">Ligase</keyword>
<keyword id="KW-0547">Nucleotide-binding</keyword>
<keyword id="KW-0648">Protein biosynthesis</keyword>